<feature type="chain" id="PRO_1000095384" description="Arginine--tRNA ligase">
    <location>
        <begin position="1"/>
        <end position="572"/>
    </location>
</feature>
<feature type="short sequence motif" description="'HIGH' region">
    <location>
        <begin position="122"/>
        <end position="132"/>
    </location>
</feature>
<feature type="helix" evidence="2">
    <location>
        <begin position="3"/>
        <end position="17"/>
    </location>
</feature>
<feature type="strand" evidence="2">
    <location>
        <begin position="27"/>
        <end position="29"/>
    </location>
</feature>
<feature type="strand" evidence="2">
    <location>
        <begin position="37"/>
        <end position="40"/>
    </location>
</feature>
<feature type="helix" evidence="2">
    <location>
        <begin position="43"/>
        <end position="47"/>
    </location>
</feature>
<feature type="turn" evidence="2">
    <location>
        <begin position="48"/>
        <end position="51"/>
    </location>
</feature>
<feature type="helix" evidence="2">
    <location>
        <begin position="54"/>
        <end position="64"/>
    </location>
</feature>
<feature type="turn" evidence="2">
    <location>
        <begin position="65"/>
        <end position="67"/>
    </location>
</feature>
<feature type="strand" evidence="2">
    <location>
        <begin position="69"/>
        <end position="77"/>
    </location>
</feature>
<feature type="turn" evidence="2">
    <location>
        <begin position="78"/>
        <end position="80"/>
    </location>
</feature>
<feature type="strand" evidence="2">
    <location>
        <begin position="81"/>
        <end position="86"/>
    </location>
</feature>
<feature type="helix" evidence="2">
    <location>
        <begin position="88"/>
        <end position="100"/>
    </location>
</feature>
<feature type="strand" evidence="2">
    <location>
        <begin position="114"/>
        <end position="118"/>
    </location>
</feature>
<feature type="helix" evidence="2">
    <location>
        <begin position="130"/>
        <end position="148"/>
    </location>
</feature>
<feature type="strand" evidence="2">
    <location>
        <begin position="152"/>
        <end position="157"/>
    </location>
</feature>
<feature type="helix" evidence="2">
    <location>
        <begin position="165"/>
        <end position="179"/>
    </location>
</feature>
<feature type="helix" evidence="2">
    <location>
        <begin position="188"/>
        <end position="201"/>
    </location>
</feature>
<feature type="helix" evidence="2">
    <location>
        <begin position="203"/>
        <end position="218"/>
    </location>
</feature>
<feature type="helix" evidence="2">
    <location>
        <begin position="221"/>
        <end position="245"/>
    </location>
</feature>
<feature type="helix" evidence="2">
    <location>
        <begin position="251"/>
        <end position="253"/>
    </location>
</feature>
<feature type="helix" evidence="2">
    <location>
        <begin position="257"/>
        <end position="263"/>
    </location>
</feature>
<feature type="helix" evidence="2">
    <location>
        <begin position="264"/>
        <end position="273"/>
    </location>
</feature>
<feature type="strand" evidence="2">
    <location>
        <begin position="276"/>
        <end position="280"/>
    </location>
</feature>
<feature type="strand" evidence="2">
    <location>
        <begin position="283"/>
        <end position="288"/>
    </location>
</feature>
<feature type="helix" evidence="2">
    <location>
        <begin position="289"/>
        <end position="291"/>
    </location>
</feature>
<feature type="strand" evidence="2">
    <location>
        <begin position="299"/>
        <end position="304"/>
    </location>
</feature>
<feature type="helix" evidence="2">
    <location>
        <begin position="312"/>
        <end position="325"/>
    </location>
</feature>
<feature type="strand" evidence="2">
    <location>
        <begin position="330"/>
        <end position="337"/>
    </location>
</feature>
<feature type="helix" evidence="2">
    <location>
        <begin position="338"/>
        <end position="340"/>
    </location>
</feature>
<feature type="helix" evidence="2">
    <location>
        <begin position="341"/>
        <end position="353"/>
    </location>
</feature>
<feature type="strand" evidence="2">
    <location>
        <begin position="362"/>
        <end position="368"/>
    </location>
</feature>
<feature type="strand" evidence="2">
    <location>
        <begin position="376"/>
        <end position="378"/>
    </location>
</feature>
<feature type="helix" evidence="2">
    <location>
        <begin position="389"/>
        <end position="407"/>
    </location>
</feature>
<feature type="helix" evidence="2">
    <location>
        <begin position="413"/>
        <end position="433"/>
    </location>
</feature>
<feature type="helix" evidence="2">
    <location>
        <begin position="445"/>
        <end position="448"/>
    </location>
</feature>
<feature type="strand" evidence="2">
    <location>
        <begin position="451"/>
        <end position="455"/>
    </location>
</feature>
<feature type="helix" evidence="2">
    <location>
        <begin position="456"/>
        <end position="473"/>
    </location>
</feature>
<feature type="helix" evidence="2">
    <location>
        <begin position="487"/>
        <end position="496"/>
    </location>
</feature>
<feature type="helix" evidence="2">
    <location>
        <begin position="499"/>
        <end position="509"/>
    </location>
</feature>
<feature type="helix" evidence="2">
    <location>
        <begin position="513"/>
        <end position="532"/>
    </location>
</feature>
<feature type="helix" evidence="2">
    <location>
        <begin position="540"/>
        <end position="563"/>
    </location>
</feature>
<comment type="catalytic activity">
    <reaction evidence="1">
        <text>tRNA(Arg) + L-arginine + ATP = L-arginyl-tRNA(Arg) + AMP + diphosphate</text>
        <dbReference type="Rhea" id="RHEA:20301"/>
        <dbReference type="Rhea" id="RHEA-COMP:9658"/>
        <dbReference type="Rhea" id="RHEA-COMP:9673"/>
        <dbReference type="ChEBI" id="CHEBI:30616"/>
        <dbReference type="ChEBI" id="CHEBI:32682"/>
        <dbReference type="ChEBI" id="CHEBI:33019"/>
        <dbReference type="ChEBI" id="CHEBI:78442"/>
        <dbReference type="ChEBI" id="CHEBI:78513"/>
        <dbReference type="ChEBI" id="CHEBI:456215"/>
        <dbReference type="EC" id="6.1.1.19"/>
    </reaction>
</comment>
<comment type="subunit">
    <text evidence="1">Monomer.</text>
</comment>
<comment type="subcellular location">
    <subcellularLocation>
        <location evidence="1">Cytoplasm</location>
    </subcellularLocation>
</comment>
<comment type="similarity">
    <text evidence="1">Belongs to the class-I aminoacyl-tRNA synthetase family.</text>
</comment>
<dbReference type="EC" id="6.1.1.19" evidence="1"/>
<dbReference type="EMBL" id="CP001050">
    <property type="protein sequence ID" value="ACF29513.1"/>
    <property type="molecule type" value="Genomic_DNA"/>
</dbReference>
<dbReference type="RefSeq" id="WP_003688336.1">
    <property type="nucleotide sequence ID" value="NC_011035.1"/>
</dbReference>
<dbReference type="PDB" id="6AO8">
    <property type="method" value="X-ray"/>
    <property type="resolution" value="1.70 A"/>
    <property type="chains" value="A=1-572"/>
</dbReference>
<dbReference type="PDBsum" id="6AO8"/>
<dbReference type="SMR" id="B4RL22"/>
<dbReference type="GeneID" id="66753286"/>
<dbReference type="KEGG" id="ngk:NGK_0832"/>
<dbReference type="HOGENOM" id="CLU_006406_5_1_4"/>
<dbReference type="Proteomes" id="UP000002564">
    <property type="component" value="Chromosome"/>
</dbReference>
<dbReference type="GO" id="GO:0005737">
    <property type="term" value="C:cytoplasm"/>
    <property type="evidence" value="ECO:0007669"/>
    <property type="project" value="UniProtKB-SubCell"/>
</dbReference>
<dbReference type="GO" id="GO:0004814">
    <property type="term" value="F:arginine-tRNA ligase activity"/>
    <property type="evidence" value="ECO:0007669"/>
    <property type="project" value="UniProtKB-UniRule"/>
</dbReference>
<dbReference type="GO" id="GO:0005524">
    <property type="term" value="F:ATP binding"/>
    <property type="evidence" value="ECO:0007669"/>
    <property type="project" value="UniProtKB-UniRule"/>
</dbReference>
<dbReference type="GO" id="GO:0006420">
    <property type="term" value="P:arginyl-tRNA aminoacylation"/>
    <property type="evidence" value="ECO:0007669"/>
    <property type="project" value="UniProtKB-UniRule"/>
</dbReference>
<dbReference type="CDD" id="cd07956">
    <property type="entry name" value="Anticodon_Ia_Arg"/>
    <property type="match status" value="1"/>
</dbReference>
<dbReference type="CDD" id="cd00671">
    <property type="entry name" value="ArgRS_core"/>
    <property type="match status" value="1"/>
</dbReference>
<dbReference type="FunFam" id="3.40.50.620:FF:000030">
    <property type="entry name" value="Arginine--tRNA ligase"/>
    <property type="match status" value="1"/>
</dbReference>
<dbReference type="FunFam" id="1.10.730.10:FF:000006">
    <property type="entry name" value="Arginyl-tRNA synthetase 2, mitochondrial"/>
    <property type="match status" value="1"/>
</dbReference>
<dbReference type="Gene3D" id="3.30.1360.70">
    <property type="entry name" value="Arginyl tRNA synthetase N-terminal domain"/>
    <property type="match status" value="1"/>
</dbReference>
<dbReference type="Gene3D" id="3.40.50.620">
    <property type="entry name" value="HUPs"/>
    <property type="match status" value="1"/>
</dbReference>
<dbReference type="Gene3D" id="1.10.730.10">
    <property type="entry name" value="Isoleucyl-tRNA Synthetase, Domain 1"/>
    <property type="match status" value="1"/>
</dbReference>
<dbReference type="HAMAP" id="MF_00123">
    <property type="entry name" value="Arg_tRNA_synth"/>
    <property type="match status" value="1"/>
</dbReference>
<dbReference type="InterPro" id="IPR001412">
    <property type="entry name" value="aa-tRNA-synth_I_CS"/>
</dbReference>
<dbReference type="InterPro" id="IPR001278">
    <property type="entry name" value="Arg-tRNA-ligase"/>
</dbReference>
<dbReference type="InterPro" id="IPR005148">
    <property type="entry name" value="Arg-tRNA-synth_N"/>
</dbReference>
<dbReference type="InterPro" id="IPR036695">
    <property type="entry name" value="Arg-tRNA-synth_N_sf"/>
</dbReference>
<dbReference type="InterPro" id="IPR035684">
    <property type="entry name" value="ArgRS_core"/>
</dbReference>
<dbReference type="InterPro" id="IPR008909">
    <property type="entry name" value="DALR_anticod-bd"/>
</dbReference>
<dbReference type="InterPro" id="IPR014729">
    <property type="entry name" value="Rossmann-like_a/b/a_fold"/>
</dbReference>
<dbReference type="InterPro" id="IPR009080">
    <property type="entry name" value="tRNAsynth_Ia_anticodon-bd"/>
</dbReference>
<dbReference type="NCBIfam" id="TIGR00456">
    <property type="entry name" value="argS"/>
    <property type="match status" value="1"/>
</dbReference>
<dbReference type="PANTHER" id="PTHR11956:SF5">
    <property type="entry name" value="ARGININE--TRNA LIGASE, CYTOPLASMIC"/>
    <property type="match status" value="1"/>
</dbReference>
<dbReference type="PANTHER" id="PTHR11956">
    <property type="entry name" value="ARGINYL-TRNA SYNTHETASE"/>
    <property type="match status" value="1"/>
</dbReference>
<dbReference type="Pfam" id="PF03485">
    <property type="entry name" value="Arg_tRNA_synt_N"/>
    <property type="match status" value="1"/>
</dbReference>
<dbReference type="Pfam" id="PF05746">
    <property type="entry name" value="DALR_1"/>
    <property type="match status" value="1"/>
</dbReference>
<dbReference type="Pfam" id="PF00750">
    <property type="entry name" value="tRNA-synt_1d"/>
    <property type="match status" value="1"/>
</dbReference>
<dbReference type="PRINTS" id="PR01038">
    <property type="entry name" value="TRNASYNTHARG"/>
</dbReference>
<dbReference type="SMART" id="SM01016">
    <property type="entry name" value="Arg_tRNA_synt_N"/>
    <property type="match status" value="1"/>
</dbReference>
<dbReference type="SMART" id="SM00836">
    <property type="entry name" value="DALR_1"/>
    <property type="match status" value="1"/>
</dbReference>
<dbReference type="SUPFAM" id="SSF47323">
    <property type="entry name" value="Anticodon-binding domain of a subclass of class I aminoacyl-tRNA synthetases"/>
    <property type="match status" value="1"/>
</dbReference>
<dbReference type="SUPFAM" id="SSF55190">
    <property type="entry name" value="Arginyl-tRNA synthetase (ArgRS), N-terminal 'additional' domain"/>
    <property type="match status" value="1"/>
</dbReference>
<dbReference type="SUPFAM" id="SSF52374">
    <property type="entry name" value="Nucleotidylyl transferase"/>
    <property type="match status" value="1"/>
</dbReference>
<dbReference type="PROSITE" id="PS00178">
    <property type="entry name" value="AA_TRNA_LIGASE_I"/>
    <property type="match status" value="1"/>
</dbReference>
<reference key="1">
    <citation type="journal article" date="2008" name="J. Bacteriol.">
        <title>Complete genome sequence of Neisseria gonorrhoeae NCCP11945.</title>
        <authorList>
            <person name="Chung G.T."/>
            <person name="Yoo J.S."/>
            <person name="Oh H.B."/>
            <person name="Lee Y.S."/>
            <person name="Cha S.H."/>
            <person name="Kim S.J."/>
            <person name="Yoo C.K."/>
        </authorList>
    </citation>
    <scope>NUCLEOTIDE SEQUENCE [LARGE SCALE GENOMIC DNA]</scope>
    <source>
        <strain>NCCP11945</strain>
    </source>
</reference>
<accession>B4RL22</accession>
<name>SYR_NEIG2</name>
<keyword id="KW-0002">3D-structure</keyword>
<keyword id="KW-0030">Aminoacyl-tRNA synthetase</keyword>
<keyword id="KW-0067">ATP-binding</keyword>
<keyword id="KW-0963">Cytoplasm</keyword>
<keyword id="KW-0436">Ligase</keyword>
<keyword id="KW-0547">Nucleotide-binding</keyword>
<keyword id="KW-0648">Protein biosynthesis</keyword>
<gene>
    <name evidence="1" type="primary">argS</name>
    <name type="ordered locus">NGK_0832</name>
</gene>
<organism>
    <name type="scientific">Neisseria gonorrhoeae (strain NCCP11945)</name>
    <dbReference type="NCBI Taxonomy" id="521006"/>
    <lineage>
        <taxon>Bacteria</taxon>
        <taxon>Pseudomonadati</taxon>
        <taxon>Pseudomonadota</taxon>
        <taxon>Betaproteobacteria</taxon>
        <taxon>Neisseriales</taxon>
        <taxon>Neisseriaceae</taxon>
        <taxon>Neisseria</taxon>
    </lineage>
</organism>
<sequence>MNLHQTVEHEAAAAFAAAGIAGSPVVLQPTKNAEHGDFQINGVMGAAKKAKQNPRELAQKVADALAGNAVIESAEVAGPGFINLRLRHEFLAQNIHAALNDARFGVAKTAQPQTVVIDYSSPNLAKEMHVGHLRSSIIGDSISRVLEFTGNTVIRQNHVGDWGTQFGMLVAYLVEQQKDNAAFELADLEQFYRAAKVRFDEDPAFADTAREYVVKLQGGDETVLALWKQFVDISLSHAQAVYDTLGLKLRPEDVAGESKYNDDLQPVADDLVQKGLAVEDDGAKVVFLDEFKNKEGEPAAFIVQKQGGGFLYASTDLACLRYRIGRLKAGRLLYVVDHRQALHFEQLFTTSRKAGYLPENAKAEFIGFGTMMGKDGKPFKTRSGDTVKLVDLLTEAVERATALVKEKNPELGADEAAKIGKTVGIGAVKYADLSKNRTSDYVFDWDAMLSFEGNTAPYLQYAYTRVQSVFRKAGEWDATAPTVLTEPLEKQLAAELLKFENVLQSVADTAYPHYLAAYLYQAATLFSRFYEACPILKAEGASRNSRLQLAKLTGNTLKQGLDLLGIDVLDVM</sequence>
<evidence type="ECO:0000255" key="1">
    <source>
        <dbReference type="HAMAP-Rule" id="MF_00123"/>
    </source>
</evidence>
<evidence type="ECO:0007829" key="2">
    <source>
        <dbReference type="PDB" id="6AO8"/>
    </source>
</evidence>
<protein>
    <recommendedName>
        <fullName evidence="1">Arginine--tRNA ligase</fullName>
        <ecNumber evidence="1">6.1.1.19</ecNumber>
    </recommendedName>
    <alternativeName>
        <fullName evidence="1">Arginyl-tRNA synthetase</fullName>
        <shortName evidence="1">ArgRS</shortName>
    </alternativeName>
</protein>
<proteinExistence type="evidence at protein level"/>